<keyword id="KW-0067">ATP-binding</keyword>
<keyword id="KW-0418">Kinase</keyword>
<keyword id="KW-0545">Nucleotide biosynthesis</keyword>
<keyword id="KW-0547">Nucleotide-binding</keyword>
<keyword id="KW-1185">Reference proteome</keyword>
<keyword id="KW-0808">Transferase</keyword>
<protein>
    <recommendedName>
        <fullName evidence="1">Thymidylate kinase</fullName>
        <ecNumber evidence="1">2.7.4.9</ecNumber>
    </recommendedName>
    <alternativeName>
        <fullName evidence="1">dTMP kinase</fullName>
    </alternativeName>
</protein>
<sequence length="208" mass="23804">MKGLFVTIEGPEGSGKTTLIQSLLPYFEQKEQKVMATREPGGIAISEDIRTILHKQEYTMMEARTEALLYAAARRQHLVEKVMPALNEDYLVLCDRFIDSSLAYQGYARGLGMDKVFEINRFATEDCMPSLTIYLDIEPEVGLARIAKDAGREVNRLDMEDISFHKRVREGYLQVVERFSDRIVLVNADQPMEKLIEEVIQVIEDKLL</sequence>
<accession>Q81W11</accession>
<accession>Q6I514</accession>
<accession>Q6KYQ8</accession>
<name>KTHY_BACAN</name>
<comment type="function">
    <text evidence="1">Phosphorylation of dTMP to form dTDP in both de novo and salvage pathways of dTTP synthesis.</text>
</comment>
<comment type="catalytic activity">
    <reaction evidence="1">
        <text>dTMP + ATP = dTDP + ADP</text>
        <dbReference type="Rhea" id="RHEA:13517"/>
        <dbReference type="ChEBI" id="CHEBI:30616"/>
        <dbReference type="ChEBI" id="CHEBI:58369"/>
        <dbReference type="ChEBI" id="CHEBI:63528"/>
        <dbReference type="ChEBI" id="CHEBI:456216"/>
        <dbReference type="EC" id="2.7.4.9"/>
    </reaction>
</comment>
<comment type="similarity">
    <text evidence="1">Belongs to the thymidylate kinase family.</text>
</comment>
<feature type="chain" id="PRO_0000155231" description="Thymidylate kinase">
    <location>
        <begin position="1"/>
        <end position="208"/>
    </location>
</feature>
<feature type="binding site" evidence="1">
    <location>
        <begin position="10"/>
        <end position="17"/>
    </location>
    <ligand>
        <name>ATP</name>
        <dbReference type="ChEBI" id="CHEBI:30616"/>
    </ligand>
</feature>
<organism>
    <name type="scientific">Bacillus anthracis</name>
    <dbReference type="NCBI Taxonomy" id="1392"/>
    <lineage>
        <taxon>Bacteria</taxon>
        <taxon>Bacillati</taxon>
        <taxon>Bacillota</taxon>
        <taxon>Bacilli</taxon>
        <taxon>Bacillales</taxon>
        <taxon>Bacillaceae</taxon>
        <taxon>Bacillus</taxon>
        <taxon>Bacillus cereus group</taxon>
    </lineage>
</organism>
<gene>
    <name evidence="1" type="primary">tmk</name>
    <name type="ordered locus">BA_0027</name>
    <name type="ordered locus">GBAA_0027</name>
    <name type="ordered locus">BAS0029</name>
</gene>
<reference key="1">
    <citation type="journal article" date="2003" name="Nature">
        <title>The genome sequence of Bacillus anthracis Ames and comparison to closely related bacteria.</title>
        <authorList>
            <person name="Read T.D."/>
            <person name="Peterson S.N."/>
            <person name="Tourasse N.J."/>
            <person name="Baillie L.W."/>
            <person name="Paulsen I.T."/>
            <person name="Nelson K.E."/>
            <person name="Tettelin H."/>
            <person name="Fouts D.E."/>
            <person name="Eisen J.A."/>
            <person name="Gill S.R."/>
            <person name="Holtzapple E.K."/>
            <person name="Okstad O.A."/>
            <person name="Helgason E."/>
            <person name="Rilstone J."/>
            <person name="Wu M."/>
            <person name="Kolonay J.F."/>
            <person name="Beanan M.J."/>
            <person name="Dodson R.J."/>
            <person name="Brinkac L.M."/>
            <person name="Gwinn M.L."/>
            <person name="DeBoy R.T."/>
            <person name="Madpu R."/>
            <person name="Daugherty S.C."/>
            <person name="Durkin A.S."/>
            <person name="Haft D.H."/>
            <person name="Nelson W.C."/>
            <person name="Peterson J.D."/>
            <person name="Pop M."/>
            <person name="Khouri H.M."/>
            <person name="Radune D."/>
            <person name="Benton J.L."/>
            <person name="Mahamoud Y."/>
            <person name="Jiang L."/>
            <person name="Hance I.R."/>
            <person name="Weidman J.F."/>
            <person name="Berry K.J."/>
            <person name="Plaut R.D."/>
            <person name="Wolf A.M."/>
            <person name="Watkins K.L."/>
            <person name="Nierman W.C."/>
            <person name="Hazen A."/>
            <person name="Cline R.T."/>
            <person name="Redmond C."/>
            <person name="Thwaite J.E."/>
            <person name="White O."/>
            <person name="Salzberg S.L."/>
            <person name="Thomason B."/>
            <person name="Friedlander A.M."/>
            <person name="Koehler T.M."/>
            <person name="Hanna P.C."/>
            <person name="Kolstoe A.-B."/>
            <person name="Fraser C.M."/>
        </authorList>
    </citation>
    <scope>NUCLEOTIDE SEQUENCE [LARGE SCALE GENOMIC DNA]</scope>
    <source>
        <strain>Ames / isolate Porton</strain>
    </source>
</reference>
<reference key="2">
    <citation type="journal article" date="2009" name="J. Bacteriol.">
        <title>The complete genome sequence of Bacillus anthracis Ames 'Ancestor'.</title>
        <authorList>
            <person name="Ravel J."/>
            <person name="Jiang L."/>
            <person name="Stanley S.T."/>
            <person name="Wilson M.R."/>
            <person name="Decker R.S."/>
            <person name="Read T.D."/>
            <person name="Worsham P."/>
            <person name="Keim P.S."/>
            <person name="Salzberg S.L."/>
            <person name="Fraser-Liggett C.M."/>
            <person name="Rasko D.A."/>
        </authorList>
    </citation>
    <scope>NUCLEOTIDE SEQUENCE [LARGE SCALE GENOMIC DNA]</scope>
    <source>
        <strain>Ames ancestor</strain>
    </source>
</reference>
<reference key="3">
    <citation type="submission" date="2004-01" db="EMBL/GenBank/DDBJ databases">
        <title>Complete genome sequence of Bacillus anthracis Sterne.</title>
        <authorList>
            <person name="Brettin T.S."/>
            <person name="Bruce D."/>
            <person name="Challacombe J.F."/>
            <person name="Gilna P."/>
            <person name="Han C."/>
            <person name="Hill K."/>
            <person name="Hitchcock P."/>
            <person name="Jackson P."/>
            <person name="Keim P."/>
            <person name="Longmire J."/>
            <person name="Lucas S."/>
            <person name="Okinaka R."/>
            <person name="Richardson P."/>
            <person name="Rubin E."/>
            <person name="Tice H."/>
        </authorList>
    </citation>
    <scope>NUCLEOTIDE SEQUENCE [LARGE SCALE GENOMIC DNA]</scope>
    <source>
        <strain>Sterne</strain>
    </source>
</reference>
<dbReference type="EC" id="2.7.4.9" evidence="1"/>
<dbReference type="EMBL" id="AE016879">
    <property type="protein sequence ID" value="AAP24083.1"/>
    <property type="molecule type" value="Genomic_DNA"/>
</dbReference>
<dbReference type="EMBL" id="AE017334">
    <property type="protein sequence ID" value="AAT29107.1"/>
    <property type="molecule type" value="Genomic_DNA"/>
</dbReference>
<dbReference type="EMBL" id="AE017225">
    <property type="protein sequence ID" value="AAT52367.1"/>
    <property type="molecule type" value="Genomic_DNA"/>
</dbReference>
<dbReference type="RefSeq" id="NP_842597.1">
    <property type="nucleotide sequence ID" value="NC_003997.3"/>
</dbReference>
<dbReference type="RefSeq" id="WP_000677237.1">
    <property type="nucleotide sequence ID" value="NZ_WXXJ01000001.1"/>
</dbReference>
<dbReference type="RefSeq" id="YP_026316.1">
    <property type="nucleotide sequence ID" value="NC_005945.1"/>
</dbReference>
<dbReference type="SMR" id="Q81W11"/>
<dbReference type="STRING" id="261594.GBAA_0027"/>
<dbReference type="DNASU" id="1087006"/>
<dbReference type="GeneID" id="45020070"/>
<dbReference type="KEGG" id="ban:BA_0027"/>
<dbReference type="KEGG" id="bar:GBAA_0027"/>
<dbReference type="KEGG" id="bat:BAS0029"/>
<dbReference type="PATRIC" id="fig|198094.11.peg.26"/>
<dbReference type="eggNOG" id="COG0125">
    <property type="taxonomic scope" value="Bacteria"/>
</dbReference>
<dbReference type="HOGENOM" id="CLU_049131_0_2_9"/>
<dbReference type="OMA" id="FLYTADH"/>
<dbReference type="OrthoDB" id="9774907at2"/>
<dbReference type="BRENDA" id="2.7.4.9">
    <property type="organism ID" value="634"/>
</dbReference>
<dbReference type="Proteomes" id="UP000000427">
    <property type="component" value="Chromosome"/>
</dbReference>
<dbReference type="Proteomes" id="UP000000594">
    <property type="component" value="Chromosome"/>
</dbReference>
<dbReference type="GO" id="GO:0005829">
    <property type="term" value="C:cytosol"/>
    <property type="evidence" value="ECO:0007669"/>
    <property type="project" value="TreeGrafter"/>
</dbReference>
<dbReference type="GO" id="GO:0005524">
    <property type="term" value="F:ATP binding"/>
    <property type="evidence" value="ECO:0007669"/>
    <property type="project" value="UniProtKB-UniRule"/>
</dbReference>
<dbReference type="GO" id="GO:0004798">
    <property type="term" value="F:dTMP kinase activity"/>
    <property type="evidence" value="ECO:0007669"/>
    <property type="project" value="UniProtKB-UniRule"/>
</dbReference>
<dbReference type="GO" id="GO:0006233">
    <property type="term" value="P:dTDP biosynthetic process"/>
    <property type="evidence" value="ECO:0007669"/>
    <property type="project" value="InterPro"/>
</dbReference>
<dbReference type="GO" id="GO:0006235">
    <property type="term" value="P:dTTP biosynthetic process"/>
    <property type="evidence" value="ECO:0007669"/>
    <property type="project" value="UniProtKB-UniRule"/>
</dbReference>
<dbReference type="GO" id="GO:0006227">
    <property type="term" value="P:dUDP biosynthetic process"/>
    <property type="evidence" value="ECO:0007669"/>
    <property type="project" value="TreeGrafter"/>
</dbReference>
<dbReference type="CDD" id="cd01672">
    <property type="entry name" value="TMPK"/>
    <property type="match status" value="1"/>
</dbReference>
<dbReference type="FunFam" id="3.40.50.300:FF:000225">
    <property type="entry name" value="Thymidylate kinase"/>
    <property type="match status" value="1"/>
</dbReference>
<dbReference type="Gene3D" id="3.40.50.300">
    <property type="entry name" value="P-loop containing nucleotide triphosphate hydrolases"/>
    <property type="match status" value="1"/>
</dbReference>
<dbReference type="HAMAP" id="MF_00165">
    <property type="entry name" value="Thymidylate_kinase"/>
    <property type="match status" value="1"/>
</dbReference>
<dbReference type="InterPro" id="IPR027417">
    <property type="entry name" value="P-loop_NTPase"/>
</dbReference>
<dbReference type="InterPro" id="IPR039430">
    <property type="entry name" value="Thymidylate_kin-like_dom"/>
</dbReference>
<dbReference type="InterPro" id="IPR018095">
    <property type="entry name" value="Thymidylate_kin_CS"/>
</dbReference>
<dbReference type="InterPro" id="IPR018094">
    <property type="entry name" value="Thymidylate_kinase"/>
</dbReference>
<dbReference type="NCBIfam" id="TIGR00041">
    <property type="entry name" value="DTMP_kinase"/>
    <property type="match status" value="1"/>
</dbReference>
<dbReference type="PANTHER" id="PTHR10344">
    <property type="entry name" value="THYMIDYLATE KINASE"/>
    <property type="match status" value="1"/>
</dbReference>
<dbReference type="PANTHER" id="PTHR10344:SF4">
    <property type="entry name" value="UMP-CMP KINASE 2, MITOCHONDRIAL"/>
    <property type="match status" value="1"/>
</dbReference>
<dbReference type="Pfam" id="PF02223">
    <property type="entry name" value="Thymidylate_kin"/>
    <property type="match status" value="1"/>
</dbReference>
<dbReference type="SUPFAM" id="SSF52540">
    <property type="entry name" value="P-loop containing nucleoside triphosphate hydrolases"/>
    <property type="match status" value="1"/>
</dbReference>
<dbReference type="PROSITE" id="PS01331">
    <property type="entry name" value="THYMIDYLATE_KINASE"/>
    <property type="match status" value="1"/>
</dbReference>
<proteinExistence type="inferred from homology"/>
<evidence type="ECO:0000255" key="1">
    <source>
        <dbReference type="HAMAP-Rule" id="MF_00165"/>
    </source>
</evidence>